<reference key="1">
    <citation type="journal article" date="2001" name="Lancet">
        <title>Whole genome sequencing of meticillin-resistant Staphylococcus aureus.</title>
        <authorList>
            <person name="Kuroda M."/>
            <person name="Ohta T."/>
            <person name="Uchiyama I."/>
            <person name="Baba T."/>
            <person name="Yuzawa H."/>
            <person name="Kobayashi I."/>
            <person name="Cui L."/>
            <person name="Oguchi A."/>
            <person name="Aoki K."/>
            <person name="Nagai Y."/>
            <person name="Lian J.-Q."/>
            <person name="Ito T."/>
            <person name="Kanamori M."/>
            <person name="Matsumaru H."/>
            <person name="Maruyama A."/>
            <person name="Murakami H."/>
            <person name="Hosoyama A."/>
            <person name="Mizutani-Ui Y."/>
            <person name="Takahashi N.K."/>
            <person name="Sawano T."/>
            <person name="Inoue R."/>
            <person name="Kaito C."/>
            <person name="Sekimizu K."/>
            <person name="Hirakawa H."/>
            <person name="Kuhara S."/>
            <person name="Goto S."/>
            <person name="Yabuzaki J."/>
            <person name="Kanehisa M."/>
            <person name="Yamashita A."/>
            <person name="Oshima K."/>
            <person name="Furuya K."/>
            <person name="Yoshino C."/>
            <person name="Shiba T."/>
            <person name="Hattori M."/>
            <person name="Ogasawara N."/>
            <person name="Hayashi H."/>
            <person name="Hiramatsu K."/>
        </authorList>
    </citation>
    <scope>NUCLEOTIDE SEQUENCE [LARGE SCALE GENOMIC DNA]</scope>
    <source>
        <strain>N315</strain>
    </source>
</reference>
<keyword id="KW-0028">Amino-acid biosynthesis</keyword>
<keyword id="KW-0963">Cytoplasm</keyword>
<keyword id="KW-0368">Histidine biosynthesis</keyword>
<keyword id="KW-0456">Lyase</keyword>
<comment type="function">
    <text evidence="1">IGPS catalyzes the conversion of PRFAR and glutamine to IGP, AICAR and glutamate. The HisF subunit catalyzes the cyclization activity that produces IGP and AICAR from PRFAR using the ammonia provided by the HisH subunit (By similarity).</text>
</comment>
<comment type="catalytic activity">
    <reaction>
        <text>5-[(5-phospho-1-deoxy-D-ribulos-1-ylimino)methylamino]-1-(5-phospho-beta-D-ribosyl)imidazole-4-carboxamide + L-glutamine = D-erythro-1-(imidazol-4-yl)glycerol 3-phosphate + 5-amino-1-(5-phospho-beta-D-ribosyl)imidazole-4-carboxamide + L-glutamate + H(+)</text>
        <dbReference type="Rhea" id="RHEA:24793"/>
        <dbReference type="ChEBI" id="CHEBI:15378"/>
        <dbReference type="ChEBI" id="CHEBI:29985"/>
        <dbReference type="ChEBI" id="CHEBI:58278"/>
        <dbReference type="ChEBI" id="CHEBI:58359"/>
        <dbReference type="ChEBI" id="CHEBI:58475"/>
        <dbReference type="ChEBI" id="CHEBI:58525"/>
        <dbReference type="EC" id="4.3.2.10"/>
    </reaction>
</comment>
<comment type="pathway">
    <text>Amino-acid biosynthesis; L-histidine biosynthesis; L-histidine from 5-phospho-alpha-D-ribose 1-diphosphate: step 5/9.</text>
</comment>
<comment type="subunit">
    <text evidence="1">Heterodimer of HisH and HisF.</text>
</comment>
<comment type="subcellular location">
    <subcellularLocation>
        <location evidence="1">Cytoplasm</location>
    </subcellularLocation>
</comment>
<comment type="similarity">
    <text evidence="3">Belongs to the HisA/HisF family.</text>
</comment>
<dbReference type="EC" id="4.3.2.10"/>
<dbReference type="EMBL" id="BA000018">
    <property type="protein sequence ID" value="BAB43771.1"/>
    <property type="molecule type" value="Genomic_DNA"/>
</dbReference>
<dbReference type="PIR" id="A99976">
    <property type="entry name" value="A99976"/>
</dbReference>
<dbReference type="SMR" id="P64362"/>
<dbReference type="EnsemblBacteria" id="BAB43771">
    <property type="protein sequence ID" value="BAB43771"/>
    <property type="gene ID" value="BAB43771"/>
</dbReference>
<dbReference type="KEGG" id="sau:SA2465"/>
<dbReference type="HOGENOM" id="CLU_048577_4_0_9"/>
<dbReference type="UniPathway" id="UPA00031">
    <property type="reaction ID" value="UER00010"/>
</dbReference>
<dbReference type="GO" id="GO:0005737">
    <property type="term" value="C:cytoplasm"/>
    <property type="evidence" value="ECO:0007669"/>
    <property type="project" value="UniProtKB-SubCell"/>
</dbReference>
<dbReference type="GO" id="GO:0000107">
    <property type="term" value="F:imidazoleglycerol-phosphate synthase activity"/>
    <property type="evidence" value="ECO:0007669"/>
    <property type="project" value="UniProtKB-UniRule"/>
</dbReference>
<dbReference type="GO" id="GO:0016829">
    <property type="term" value="F:lyase activity"/>
    <property type="evidence" value="ECO:0007669"/>
    <property type="project" value="UniProtKB-KW"/>
</dbReference>
<dbReference type="GO" id="GO:0000105">
    <property type="term" value="P:L-histidine biosynthetic process"/>
    <property type="evidence" value="ECO:0007669"/>
    <property type="project" value="UniProtKB-UniRule"/>
</dbReference>
<dbReference type="CDD" id="cd04731">
    <property type="entry name" value="HisF"/>
    <property type="match status" value="1"/>
</dbReference>
<dbReference type="FunFam" id="3.20.20.70:FF:000462">
    <property type="entry name" value="Multifunctional fusion protein"/>
    <property type="match status" value="1"/>
</dbReference>
<dbReference type="Gene3D" id="3.20.20.70">
    <property type="entry name" value="Aldolase class I"/>
    <property type="match status" value="1"/>
</dbReference>
<dbReference type="HAMAP" id="MF_01013">
    <property type="entry name" value="HisF"/>
    <property type="match status" value="1"/>
</dbReference>
<dbReference type="InterPro" id="IPR013785">
    <property type="entry name" value="Aldolase_TIM"/>
</dbReference>
<dbReference type="InterPro" id="IPR006062">
    <property type="entry name" value="His_biosynth"/>
</dbReference>
<dbReference type="InterPro" id="IPR004651">
    <property type="entry name" value="HisF"/>
</dbReference>
<dbReference type="InterPro" id="IPR050064">
    <property type="entry name" value="IGPS_HisA/HisF"/>
</dbReference>
<dbReference type="InterPro" id="IPR011060">
    <property type="entry name" value="RibuloseP-bd_barrel"/>
</dbReference>
<dbReference type="NCBIfam" id="TIGR00735">
    <property type="entry name" value="hisF"/>
    <property type="match status" value="1"/>
</dbReference>
<dbReference type="PANTHER" id="PTHR21235:SF2">
    <property type="entry name" value="IMIDAZOLE GLYCEROL PHOSPHATE SYNTHASE HISHF"/>
    <property type="match status" value="1"/>
</dbReference>
<dbReference type="PANTHER" id="PTHR21235">
    <property type="entry name" value="IMIDAZOLE GLYCEROL PHOSPHATE SYNTHASE SUBUNIT HISF/H IGP SYNTHASE SUBUNIT HISF/H"/>
    <property type="match status" value="1"/>
</dbReference>
<dbReference type="Pfam" id="PF00977">
    <property type="entry name" value="His_biosynth"/>
    <property type="match status" value="1"/>
</dbReference>
<dbReference type="SUPFAM" id="SSF51366">
    <property type="entry name" value="Ribulose-phoshate binding barrel"/>
    <property type="match status" value="1"/>
</dbReference>
<sequence length="252" mass="27530">MIKKRIIPCLDVKDGRVVKGIQFKGLRDIGNPVDLAIYYNEAGADELVFLDISKTEEGHSLMLEVIEQTASRLFIPLTVGGGIQSLDDITQLLNHGADKVSLNSSALKNPQLIKQASDKFGRQCICIAIDSYYDPERKAHYCCTHGGKKMTNIKVYDWVQQVEQLGAGELLVTSMGHDGMKQGFDIEHLAKIKSLVNIPIIASGGGGNAQHFVELFNQTDVSAGLAASILHDRETTVQSIKEVIRQGGIAVR</sequence>
<proteinExistence type="inferred from homology"/>
<gene>
    <name type="primary">hisF</name>
    <name type="ordered locus">SA2465</name>
</gene>
<evidence type="ECO:0000250" key="1"/>
<evidence type="ECO:0000255" key="2"/>
<evidence type="ECO:0000305" key="3"/>
<organism>
    <name type="scientific">Staphylococcus aureus (strain N315)</name>
    <dbReference type="NCBI Taxonomy" id="158879"/>
    <lineage>
        <taxon>Bacteria</taxon>
        <taxon>Bacillati</taxon>
        <taxon>Bacillota</taxon>
        <taxon>Bacilli</taxon>
        <taxon>Bacillales</taxon>
        <taxon>Staphylococcaceae</taxon>
        <taxon>Staphylococcus</taxon>
    </lineage>
</organism>
<feature type="chain" id="PRO_0000142237" description="Imidazole glycerol phosphate synthase subunit HisF">
    <location>
        <begin position="1"/>
        <end position="252"/>
    </location>
</feature>
<feature type="active site" evidence="2">
    <location>
        <position position="11"/>
    </location>
</feature>
<feature type="active site" evidence="2">
    <location>
        <position position="130"/>
    </location>
</feature>
<accession>P64362</accession>
<accession>Q99QW8</accession>
<protein>
    <recommendedName>
        <fullName>Imidazole glycerol phosphate synthase subunit HisF</fullName>
        <ecNumber>4.3.2.10</ecNumber>
    </recommendedName>
    <alternativeName>
        <fullName>IGP synthase cyclase subunit</fullName>
    </alternativeName>
    <alternativeName>
        <fullName>IGP synthase subunit HisF</fullName>
    </alternativeName>
    <alternativeName>
        <fullName>ImGP synthase subunit HisF</fullName>
        <shortName>IGPS subunit HisF</shortName>
    </alternativeName>
</protein>
<name>HIS6_STAAN</name>